<protein>
    <recommendedName>
        <fullName>Multiple RNA-binding domain-containing protein 1</fullName>
    </recommendedName>
</protein>
<evidence type="ECO:0000250" key="1"/>
<evidence type="ECO:0000255" key="2">
    <source>
        <dbReference type="PROSITE-ProRule" id="PRU00176"/>
    </source>
</evidence>
<evidence type="ECO:0000256" key="3">
    <source>
        <dbReference type="SAM" id="MobiDB-lite"/>
    </source>
</evidence>
<evidence type="ECO:0000269" key="4">
    <source>
    </source>
</evidence>
<evidence type="ECO:0000305" key="5"/>
<keyword id="KW-0539">Nucleus</keyword>
<keyword id="KW-1185">Reference proteome</keyword>
<keyword id="KW-0677">Repeat</keyword>
<keyword id="KW-0687">Ribonucleoprotein</keyword>
<keyword id="KW-0694">RNA-binding</keyword>
<keyword id="KW-0698">rRNA processing</keyword>
<reference key="1">
    <citation type="journal article" date="2000" name="Yeast">
        <title>A 38 kb segment containing the cdc2 gene from the left arm of fission yeast chromosome II: sequence analysis and characterization of the genomic DNA and cDNAs encoded on the segment.</title>
        <authorList>
            <person name="Machida M."/>
            <person name="Yamazaki S."/>
            <person name="Kunihiro S."/>
            <person name="Tanaka T."/>
            <person name="Kushida N."/>
            <person name="Jinno K."/>
            <person name="Haikawa Y."/>
            <person name="Yamazaki J."/>
            <person name="Yamamoto S."/>
            <person name="Sekine M."/>
            <person name="Oguchi A."/>
            <person name="Nagai Y."/>
            <person name="Sakai M."/>
            <person name="Aoki K."/>
            <person name="Ogura K."/>
            <person name="Kudoh Y."/>
            <person name="Kikuchi H."/>
            <person name="Zhang M.Q."/>
            <person name="Yanagida M."/>
        </authorList>
    </citation>
    <scope>NUCLEOTIDE SEQUENCE [LARGE SCALE GENOMIC DNA]</scope>
    <source>
        <strain>972 / ATCC 24843</strain>
    </source>
</reference>
<reference key="2">
    <citation type="journal article" date="2002" name="Nature">
        <title>The genome sequence of Schizosaccharomyces pombe.</title>
        <authorList>
            <person name="Wood V."/>
            <person name="Gwilliam R."/>
            <person name="Rajandream M.A."/>
            <person name="Lyne M.H."/>
            <person name="Lyne R."/>
            <person name="Stewart A."/>
            <person name="Sgouros J.G."/>
            <person name="Peat N."/>
            <person name="Hayles J."/>
            <person name="Baker S.G."/>
            <person name="Basham D."/>
            <person name="Bowman S."/>
            <person name="Brooks K."/>
            <person name="Brown D."/>
            <person name="Brown S."/>
            <person name="Chillingworth T."/>
            <person name="Churcher C.M."/>
            <person name="Collins M."/>
            <person name="Connor R."/>
            <person name="Cronin A."/>
            <person name="Davis P."/>
            <person name="Feltwell T."/>
            <person name="Fraser A."/>
            <person name="Gentles S."/>
            <person name="Goble A."/>
            <person name="Hamlin N."/>
            <person name="Harris D.E."/>
            <person name="Hidalgo J."/>
            <person name="Hodgson G."/>
            <person name="Holroyd S."/>
            <person name="Hornsby T."/>
            <person name="Howarth S."/>
            <person name="Huckle E.J."/>
            <person name="Hunt S."/>
            <person name="Jagels K."/>
            <person name="James K.D."/>
            <person name="Jones L."/>
            <person name="Jones M."/>
            <person name="Leather S."/>
            <person name="McDonald S."/>
            <person name="McLean J."/>
            <person name="Mooney P."/>
            <person name="Moule S."/>
            <person name="Mungall K.L."/>
            <person name="Murphy L.D."/>
            <person name="Niblett D."/>
            <person name="Odell C."/>
            <person name="Oliver K."/>
            <person name="O'Neil S."/>
            <person name="Pearson D."/>
            <person name="Quail M.A."/>
            <person name="Rabbinowitsch E."/>
            <person name="Rutherford K.M."/>
            <person name="Rutter S."/>
            <person name="Saunders D."/>
            <person name="Seeger K."/>
            <person name="Sharp S."/>
            <person name="Skelton J."/>
            <person name="Simmonds M.N."/>
            <person name="Squares R."/>
            <person name="Squares S."/>
            <person name="Stevens K."/>
            <person name="Taylor K."/>
            <person name="Taylor R.G."/>
            <person name="Tivey A."/>
            <person name="Walsh S.V."/>
            <person name="Warren T."/>
            <person name="Whitehead S."/>
            <person name="Woodward J.R."/>
            <person name="Volckaert G."/>
            <person name="Aert R."/>
            <person name="Robben J."/>
            <person name="Grymonprez B."/>
            <person name="Weltjens I."/>
            <person name="Vanstreels E."/>
            <person name="Rieger M."/>
            <person name="Schaefer M."/>
            <person name="Mueller-Auer S."/>
            <person name="Gabel C."/>
            <person name="Fuchs M."/>
            <person name="Duesterhoeft A."/>
            <person name="Fritzc C."/>
            <person name="Holzer E."/>
            <person name="Moestl D."/>
            <person name="Hilbert H."/>
            <person name="Borzym K."/>
            <person name="Langer I."/>
            <person name="Beck A."/>
            <person name="Lehrach H."/>
            <person name="Reinhardt R."/>
            <person name="Pohl T.M."/>
            <person name="Eger P."/>
            <person name="Zimmermann W."/>
            <person name="Wedler H."/>
            <person name="Wambutt R."/>
            <person name="Purnelle B."/>
            <person name="Goffeau A."/>
            <person name="Cadieu E."/>
            <person name="Dreano S."/>
            <person name="Gloux S."/>
            <person name="Lelaure V."/>
            <person name="Mottier S."/>
            <person name="Galibert F."/>
            <person name="Aves S.J."/>
            <person name="Xiang Z."/>
            <person name="Hunt C."/>
            <person name="Moore K."/>
            <person name="Hurst S.M."/>
            <person name="Lucas M."/>
            <person name="Rochet M."/>
            <person name="Gaillardin C."/>
            <person name="Tallada V.A."/>
            <person name="Garzon A."/>
            <person name="Thode G."/>
            <person name="Daga R.R."/>
            <person name="Cruzado L."/>
            <person name="Jimenez J."/>
            <person name="Sanchez M."/>
            <person name="del Rey F."/>
            <person name="Benito J."/>
            <person name="Dominguez A."/>
            <person name="Revuelta J.L."/>
            <person name="Moreno S."/>
            <person name="Armstrong J."/>
            <person name="Forsburg S.L."/>
            <person name="Cerutti L."/>
            <person name="Lowe T."/>
            <person name="McCombie W.R."/>
            <person name="Paulsen I."/>
            <person name="Potashkin J."/>
            <person name="Shpakovski G.V."/>
            <person name="Ussery D."/>
            <person name="Barrell B.G."/>
            <person name="Nurse P."/>
        </authorList>
    </citation>
    <scope>NUCLEOTIDE SEQUENCE [LARGE SCALE GENOMIC DNA]</scope>
    <source>
        <strain>972 / ATCC 24843</strain>
    </source>
</reference>
<reference key="3">
    <citation type="journal article" date="2000" name="Genes Cells">
        <title>Large-scale screening of intracellular protein localization in living fission yeast cells by the use of a GFP-fusion genomic DNA library.</title>
        <authorList>
            <person name="Ding D.-Q."/>
            <person name="Tomita Y."/>
            <person name="Yamamoto A."/>
            <person name="Chikashige Y."/>
            <person name="Haraguchi T."/>
            <person name="Hiraoka Y."/>
        </authorList>
    </citation>
    <scope>NUCLEOTIDE SEQUENCE [LARGE SCALE GENOMIC DNA] OF 304-463</scope>
    <scope>SUBCELLULAR LOCATION</scope>
    <source>
        <strain>ATCC 38364 / 968</strain>
    </source>
</reference>
<feature type="chain" id="PRO_0000081644" description="Multiple RNA-binding domain-containing protein 1">
    <location>
        <begin position="1"/>
        <end position="833"/>
    </location>
</feature>
<feature type="domain" description="RRM 1" evidence="2">
    <location>
        <begin position="2"/>
        <end position="83"/>
    </location>
</feature>
<feature type="domain" description="RRM 2" evidence="2">
    <location>
        <begin position="323"/>
        <end position="401"/>
    </location>
</feature>
<feature type="domain" description="RRM 3" evidence="2">
    <location>
        <begin position="506"/>
        <end position="578"/>
    </location>
</feature>
<feature type="domain" description="RRM 4" evidence="2">
    <location>
        <begin position="619"/>
        <end position="702"/>
    </location>
</feature>
<feature type="domain" description="RRM 5" evidence="2">
    <location>
        <begin position="721"/>
        <end position="798"/>
    </location>
</feature>
<feature type="region of interest" description="Disordered" evidence="3">
    <location>
        <begin position="160"/>
        <end position="251"/>
    </location>
</feature>
<feature type="compositionally biased region" description="Basic and acidic residues" evidence="3">
    <location>
        <begin position="188"/>
        <end position="205"/>
    </location>
</feature>
<feature type="compositionally biased region" description="Basic and acidic residues" evidence="3">
    <location>
        <begin position="213"/>
        <end position="222"/>
    </location>
</feature>
<dbReference type="EMBL" id="AB004535">
    <property type="protein sequence ID" value="BAA21408.1"/>
    <property type="molecule type" value="Genomic_DNA"/>
</dbReference>
<dbReference type="EMBL" id="CU329671">
    <property type="protein sequence ID" value="CAC37370.1"/>
    <property type="molecule type" value="Genomic_DNA"/>
</dbReference>
<dbReference type="EMBL" id="AB028003">
    <property type="protein sequence ID" value="BAA87307.1"/>
    <property type="molecule type" value="Genomic_DNA"/>
</dbReference>
<dbReference type="RefSeq" id="NP_595599.1">
    <property type="nucleotide sequence ID" value="NM_001021494.2"/>
</dbReference>
<dbReference type="SMR" id="O13620"/>
<dbReference type="BioGRID" id="277815">
    <property type="interactions" value="3"/>
</dbReference>
<dbReference type="FunCoup" id="O13620">
    <property type="interactions" value="938"/>
</dbReference>
<dbReference type="STRING" id="284812.O13620"/>
<dbReference type="iPTMnet" id="O13620"/>
<dbReference type="PaxDb" id="4896-SPBP22H7.02c.1"/>
<dbReference type="EnsemblFungi" id="SPBP22H7.02c.1">
    <property type="protein sequence ID" value="SPBP22H7.02c.1:pep"/>
    <property type="gene ID" value="SPBP22H7.02c"/>
</dbReference>
<dbReference type="GeneID" id="2541303"/>
<dbReference type="KEGG" id="spo:2541303"/>
<dbReference type="PomBase" id="SPBP22H7.02c">
    <property type="gene designation" value="mrd1"/>
</dbReference>
<dbReference type="VEuPathDB" id="FungiDB:SPBP22H7.02c"/>
<dbReference type="eggNOG" id="KOG0110">
    <property type="taxonomic scope" value="Eukaryota"/>
</dbReference>
<dbReference type="HOGENOM" id="CLU_008479_0_0_1"/>
<dbReference type="InParanoid" id="O13620"/>
<dbReference type="OMA" id="LEQVHMP"/>
<dbReference type="PhylomeDB" id="O13620"/>
<dbReference type="PRO" id="PR:O13620"/>
<dbReference type="Proteomes" id="UP000002485">
    <property type="component" value="Chromosome II"/>
</dbReference>
<dbReference type="GO" id="GO:0030686">
    <property type="term" value="C:90S preribosome"/>
    <property type="evidence" value="ECO:0000266"/>
    <property type="project" value="PomBase"/>
</dbReference>
<dbReference type="GO" id="GO:0016607">
    <property type="term" value="C:nuclear speck"/>
    <property type="evidence" value="ECO:0000318"/>
    <property type="project" value="GO_Central"/>
</dbReference>
<dbReference type="GO" id="GO:0005730">
    <property type="term" value="C:nucleolus"/>
    <property type="evidence" value="ECO:0007005"/>
    <property type="project" value="PomBase"/>
</dbReference>
<dbReference type="GO" id="GO:0005634">
    <property type="term" value="C:nucleus"/>
    <property type="evidence" value="ECO:0007005"/>
    <property type="project" value="PomBase"/>
</dbReference>
<dbReference type="GO" id="GO:0003723">
    <property type="term" value="F:RNA binding"/>
    <property type="evidence" value="ECO:0000318"/>
    <property type="project" value="GO_Central"/>
</dbReference>
<dbReference type="GO" id="GO:0006364">
    <property type="term" value="P:rRNA processing"/>
    <property type="evidence" value="ECO:0000266"/>
    <property type="project" value="PomBase"/>
</dbReference>
<dbReference type="GO" id="GO:0034462">
    <property type="term" value="P:small-subunit processome assembly"/>
    <property type="evidence" value="ECO:0000266"/>
    <property type="project" value="PomBase"/>
</dbReference>
<dbReference type="CDD" id="cd12565">
    <property type="entry name" value="RRM1_MRD1"/>
    <property type="match status" value="1"/>
</dbReference>
<dbReference type="CDD" id="cd12566">
    <property type="entry name" value="RRM2_MRD1"/>
    <property type="match status" value="1"/>
</dbReference>
<dbReference type="CDD" id="cd12568">
    <property type="entry name" value="RRM3_MRD1"/>
    <property type="match status" value="1"/>
</dbReference>
<dbReference type="CDD" id="cd12319">
    <property type="entry name" value="RRM4_MRD1"/>
    <property type="match status" value="1"/>
</dbReference>
<dbReference type="CDD" id="cd12570">
    <property type="entry name" value="RRM5_MRD1"/>
    <property type="match status" value="1"/>
</dbReference>
<dbReference type="FunFam" id="3.30.70.330:FF:000247">
    <property type="entry name" value="Multiple RNA-binding domain-containing protein 1"/>
    <property type="match status" value="1"/>
</dbReference>
<dbReference type="FunFam" id="3.30.70.330:FF:000459">
    <property type="entry name" value="Multiple RNA-binding domain-containing protein 1"/>
    <property type="match status" value="1"/>
</dbReference>
<dbReference type="Gene3D" id="3.30.70.330">
    <property type="match status" value="5"/>
</dbReference>
<dbReference type="InterPro" id="IPR034482">
    <property type="entry name" value="Mrd1_RRM3"/>
</dbReference>
<dbReference type="InterPro" id="IPR012677">
    <property type="entry name" value="Nucleotide-bd_a/b_plait_sf"/>
</dbReference>
<dbReference type="InterPro" id="IPR035979">
    <property type="entry name" value="RBD_domain_sf"/>
</dbReference>
<dbReference type="InterPro" id="IPR000504">
    <property type="entry name" value="RRM_dom"/>
</dbReference>
<dbReference type="InterPro" id="IPR051945">
    <property type="entry name" value="RRM_MRD1_RNA_proc_ribogen"/>
</dbReference>
<dbReference type="PANTHER" id="PTHR48039">
    <property type="entry name" value="RNA-BINDING MOTIF PROTEIN 14B"/>
    <property type="match status" value="1"/>
</dbReference>
<dbReference type="PANTHER" id="PTHR48039:SF5">
    <property type="entry name" value="RNA-BINDING PROTEIN 28"/>
    <property type="match status" value="1"/>
</dbReference>
<dbReference type="Pfam" id="PF00076">
    <property type="entry name" value="RRM_1"/>
    <property type="match status" value="5"/>
</dbReference>
<dbReference type="SMART" id="SM00360">
    <property type="entry name" value="RRM"/>
    <property type="match status" value="5"/>
</dbReference>
<dbReference type="SUPFAM" id="SSF54928">
    <property type="entry name" value="RNA-binding domain, RBD"/>
    <property type="match status" value="3"/>
</dbReference>
<dbReference type="PROSITE" id="PS50102">
    <property type="entry name" value="RRM"/>
    <property type="match status" value="5"/>
</dbReference>
<gene>
    <name type="primary">mrd1</name>
    <name type="ORF">pi029</name>
    <name type="ORF">SPBP22H7.02c</name>
</gene>
<sequence>MSRIIIKNIPRYYDKEKLSTYLKSLPQLDAEITDVSVAKTKEGVSRRFAFIGFKNEEDADKAIRYLNKSYVETSRIEVHRALDYRSANEKLRPYSKYASKNIELKLQKKEKEEELRNLEEEKAKKKKDANLKRKFLDTLDPKAREFLKLSSSISNSRSWENEEVFDTEITNPVIPADEDDDEYQDLPAAKRHEGDSIKSTEHDSTLDSGVVIDGREKSSSELHEEESEQAAEGDTAKNSGTDAQAPLSDDEWLRLHRTRIKEKQPEEEVSVVGDELKSFDKENNDEHLERVTNDKIADASMLQKAENNVSEQERNIQLISETKRLFLRNLTYSCAEDDLKSLFGPFGQLEQVHMPIDKKTNNPKGFAYIDFHDADDAVRAYLELDAKPFQGRLLHVLPAKARSSILLDDYALSKLPLKKQRELKRKNTAASSTFSWNSLYMNADAVVTSLASRLGVKKTDILDPTSSDSAVKQALTETHVIQETKNFFEEHGVDLDAFKNAARSDNVLLVKNFPYGTSAEELTSLFSPFGELGRILIPPAGTIAIIEFLNAPDCRQAFSKLAYTRIKSSILYLEKAPRDVFTTSFKQSGKPELAQKVNAVEATTSEKVGTEDIESLDTATIYVKNLNFSTKQEEFQKVFKPLEGYLSAVIRAKPDPKRPGKYLSMGFGFVEFKDKASAVAAMHAMNGFVLDGHKLEIKLSHQGVDAAAEVRKQDSSKPKGTKILIKNLPFEATKKDVQSLLGAYGQLRSVRVPKKFDRSARGFAFAEFVTAREAANAMRALKNTHLLGRHLVLQYASNATMDDMQHAIEKMAKEANAEAAAPSITGKRLIETD</sequence>
<comment type="function">
    <text evidence="1">Involved in pre-rRNA processing.</text>
</comment>
<comment type="subcellular location">
    <subcellularLocation>
        <location evidence="4">Nucleus</location>
    </subcellularLocation>
</comment>
<comment type="similarity">
    <text evidence="5">Belongs to the RRM MRD1 family.</text>
</comment>
<name>MRD1_SCHPO</name>
<organism>
    <name type="scientific">Schizosaccharomyces pombe (strain 972 / ATCC 24843)</name>
    <name type="common">Fission yeast</name>
    <dbReference type="NCBI Taxonomy" id="284812"/>
    <lineage>
        <taxon>Eukaryota</taxon>
        <taxon>Fungi</taxon>
        <taxon>Dikarya</taxon>
        <taxon>Ascomycota</taxon>
        <taxon>Taphrinomycotina</taxon>
        <taxon>Schizosaccharomycetes</taxon>
        <taxon>Schizosaccharomycetales</taxon>
        <taxon>Schizosaccharomycetaceae</taxon>
        <taxon>Schizosaccharomyces</taxon>
    </lineage>
</organism>
<accession>O13620</accession>
<accession>Q9UTU1</accession>
<proteinExistence type="inferred from homology"/>